<protein>
    <recommendedName>
        <fullName evidence="1">RNA-binding protein Hfq</fullName>
    </recommendedName>
</protein>
<evidence type="ECO:0000255" key="1">
    <source>
        <dbReference type="HAMAP-Rule" id="MF_00436"/>
    </source>
</evidence>
<evidence type="ECO:0000255" key="2">
    <source>
        <dbReference type="PROSITE-ProRule" id="PRU01346"/>
    </source>
</evidence>
<dbReference type="EMBL" id="CP000813">
    <property type="protein sequence ID" value="ABV62307.1"/>
    <property type="molecule type" value="Genomic_DNA"/>
</dbReference>
<dbReference type="RefSeq" id="WP_003211269.1">
    <property type="nucleotide sequence ID" value="NZ_VEIS01000029.1"/>
</dbReference>
<dbReference type="SMR" id="A8FDJ0"/>
<dbReference type="STRING" id="315750.BPUM_1625"/>
<dbReference type="GeneID" id="66363223"/>
<dbReference type="KEGG" id="bpu:BPUM_1625"/>
<dbReference type="eggNOG" id="COG1923">
    <property type="taxonomic scope" value="Bacteria"/>
</dbReference>
<dbReference type="HOGENOM" id="CLU_113688_0_2_9"/>
<dbReference type="OrthoDB" id="9799751at2"/>
<dbReference type="Proteomes" id="UP000001355">
    <property type="component" value="Chromosome"/>
</dbReference>
<dbReference type="GO" id="GO:0005829">
    <property type="term" value="C:cytosol"/>
    <property type="evidence" value="ECO:0007669"/>
    <property type="project" value="TreeGrafter"/>
</dbReference>
<dbReference type="GO" id="GO:0003723">
    <property type="term" value="F:RNA binding"/>
    <property type="evidence" value="ECO:0007669"/>
    <property type="project" value="UniProtKB-UniRule"/>
</dbReference>
<dbReference type="GO" id="GO:0006355">
    <property type="term" value="P:regulation of DNA-templated transcription"/>
    <property type="evidence" value="ECO:0007669"/>
    <property type="project" value="InterPro"/>
</dbReference>
<dbReference type="GO" id="GO:0043487">
    <property type="term" value="P:regulation of RNA stability"/>
    <property type="evidence" value="ECO:0007669"/>
    <property type="project" value="TreeGrafter"/>
</dbReference>
<dbReference type="GO" id="GO:0045974">
    <property type="term" value="P:regulation of translation, ncRNA-mediated"/>
    <property type="evidence" value="ECO:0007669"/>
    <property type="project" value="TreeGrafter"/>
</dbReference>
<dbReference type="CDD" id="cd01716">
    <property type="entry name" value="Hfq"/>
    <property type="match status" value="1"/>
</dbReference>
<dbReference type="FunFam" id="2.30.30.100:FF:000012">
    <property type="entry name" value="RNA-binding protein Hfq"/>
    <property type="match status" value="1"/>
</dbReference>
<dbReference type="Gene3D" id="2.30.30.100">
    <property type="match status" value="1"/>
</dbReference>
<dbReference type="HAMAP" id="MF_00436">
    <property type="entry name" value="Hfq"/>
    <property type="match status" value="1"/>
</dbReference>
<dbReference type="InterPro" id="IPR005001">
    <property type="entry name" value="Hfq"/>
</dbReference>
<dbReference type="InterPro" id="IPR010920">
    <property type="entry name" value="LSM_dom_sf"/>
</dbReference>
<dbReference type="InterPro" id="IPR047575">
    <property type="entry name" value="Sm"/>
</dbReference>
<dbReference type="NCBIfam" id="TIGR02383">
    <property type="entry name" value="Hfq"/>
    <property type="match status" value="1"/>
</dbReference>
<dbReference type="NCBIfam" id="NF001602">
    <property type="entry name" value="PRK00395.1"/>
    <property type="match status" value="1"/>
</dbReference>
<dbReference type="PANTHER" id="PTHR34772">
    <property type="entry name" value="RNA-BINDING PROTEIN HFQ"/>
    <property type="match status" value="1"/>
</dbReference>
<dbReference type="PANTHER" id="PTHR34772:SF1">
    <property type="entry name" value="RNA-BINDING PROTEIN HFQ"/>
    <property type="match status" value="1"/>
</dbReference>
<dbReference type="Pfam" id="PF17209">
    <property type="entry name" value="Hfq"/>
    <property type="match status" value="1"/>
</dbReference>
<dbReference type="SUPFAM" id="SSF50182">
    <property type="entry name" value="Sm-like ribonucleoproteins"/>
    <property type="match status" value="1"/>
</dbReference>
<dbReference type="PROSITE" id="PS52002">
    <property type="entry name" value="SM"/>
    <property type="match status" value="1"/>
</dbReference>
<comment type="function">
    <text evidence="1">RNA chaperone that binds small regulatory RNA (sRNAs) and mRNAs to facilitate mRNA translational regulation in response to envelope stress, environmental stress and changes in metabolite concentrations. Also binds with high specificity to tRNAs.</text>
</comment>
<comment type="subunit">
    <text evidence="1">Homohexamer.</text>
</comment>
<comment type="similarity">
    <text evidence="1">Belongs to the Hfq family.</text>
</comment>
<name>HFQ_BACP2</name>
<accession>A8FDJ0</accession>
<proteinExistence type="inferred from homology"/>
<feature type="chain" id="PRO_1000060237" description="RNA-binding protein Hfq">
    <location>
        <begin position="1"/>
        <end position="73"/>
    </location>
</feature>
<feature type="domain" description="Sm" evidence="2">
    <location>
        <begin position="8"/>
        <end position="68"/>
    </location>
</feature>
<gene>
    <name evidence="1" type="primary">hfq</name>
    <name type="ordered locus">BPUM_1625</name>
</gene>
<reference key="1">
    <citation type="journal article" date="2007" name="PLoS ONE">
        <title>Paradoxical DNA repair and peroxide resistance gene conservation in Bacillus pumilus SAFR-032.</title>
        <authorList>
            <person name="Gioia J."/>
            <person name="Yerrapragada S."/>
            <person name="Qin X."/>
            <person name="Jiang H."/>
            <person name="Igboeli O.C."/>
            <person name="Muzny D."/>
            <person name="Dugan-Rocha S."/>
            <person name="Ding Y."/>
            <person name="Hawes A."/>
            <person name="Liu W."/>
            <person name="Perez L."/>
            <person name="Kovar C."/>
            <person name="Dinh H."/>
            <person name="Lee S."/>
            <person name="Nazareth L."/>
            <person name="Blyth P."/>
            <person name="Holder M."/>
            <person name="Buhay C."/>
            <person name="Tirumalai M.R."/>
            <person name="Liu Y."/>
            <person name="Dasgupta I."/>
            <person name="Bokhetache L."/>
            <person name="Fujita M."/>
            <person name="Karouia F."/>
            <person name="Eswara Moorthy P."/>
            <person name="Siefert J."/>
            <person name="Uzman A."/>
            <person name="Buzumbo P."/>
            <person name="Verma A."/>
            <person name="Zwiya H."/>
            <person name="McWilliams B.D."/>
            <person name="Olowu A."/>
            <person name="Clinkenbeard K.D."/>
            <person name="Newcombe D."/>
            <person name="Golebiewski L."/>
            <person name="Petrosino J.F."/>
            <person name="Nicholson W.L."/>
            <person name="Fox G.E."/>
            <person name="Venkateswaran K."/>
            <person name="Highlander S.K."/>
            <person name="Weinstock G.M."/>
        </authorList>
    </citation>
    <scope>NUCLEOTIDE SEQUENCE [LARGE SCALE GENOMIC DNA]</scope>
    <source>
        <strain>SAFR-032</strain>
    </source>
</reference>
<organism>
    <name type="scientific">Bacillus pumilus (strain SAFR-032)</name>
    <dbReference type="NCBI Taxonomy" id="315750"/>
    <lineage>
        <taxon>Bacteria</taxon>
        <taxon>Bacillati</taxon>
        <taxon>Bacillota</taxon>
        <taxon>Bacilli</taxon>
        <taxon>Bacillales</taxon>
        <taxon>Bacillaceae</taxon>
        <taxon>Bacillus</taxon>
    </lineage>
</organism>
<sequence>MKPINIQDQFLNQIRKDNTFVTVFLLNGFQLRGQVKGFDNFTVLLETEGKQQLIYKHAISTFAPQKNVNLELE</sequence>
<keyword id="KW-0694">RNA-binding</keyword>
<keyword id="KW-0346">Stress response</keyword>